<feature type="chain" id="PRO_0000177290" description="Large ribosomal subunit protein bL20c">
    <location>
        <begin position="1"/>
        <end position="136"/>
    </location>
</feature>
<dbReference type="EMBL" id="AY660566">
    <property type="protein sequence ID" value="AAT80702.1"/>
    <property type="molecule type" value="Genomic_DNA"/>
</dbReference>
<dbReference type="RefSeq" id="YP_209506.1">
    <property type="nucleotide sequence ID" value="NC_006861.1"/>
</dbReference>
<dbReference type="SMR" id="Q5SD32"/>
<dbReference type="GeneID" id="3283815"/>
<dbReference type="GO" id="GO:0009507">
    <property type="term" value="C:chloroplast"/>
    <property type="evidence" value="ECO:0007669"/>
    <property type="project" value="UniProtKB-SubCell"/>
</dbReference>
<dbReference type="GO" id="GO:1990904">
    <property type="term" value="C:ribonucleoprotein complex"/>
    <property type="evidence" value="ECO:0007669"/>
    <property type="project" value="UniProtKB-KW"/>
</dbReference>
<dbReference type="GO" id="GO:0005840">
    <property type="term" value="C:ribosome"/>
    <property type="evidence" value="ECO:0007669"/>
    <property type="project" value="UniProtKB-KW"/>
</dbReference>
<dbReference type="GO" id="GO:0019843">
    <property type="term" value="F:rRNA binding"/>
    <property type="evidence" value="ECO:0007669"/>
    <property type="project" value="UniProtKB-UniRule"/>
</dbReference>
<dbReference type="GO" id="GO:0003735">
    <property type="term" value="F:structural constituent of ribosome"/>
    <property type="evidence" value="ECO:0007669"/>
    <property type="project" value="InterPro"/>
</dbReference>
<dbReference type="GO" id="GO:0000027">
    <property type="term" value="P:ribosomal large subunit assembly"/>
    <property type="evidence" value="ECO:0007669"/>
    <property type="project" value="UniProtKB-UniRule"/>
</dbReference>
<dbReference type="GO" id="GO:0006412">
    <property type="term" value="P:translation"/>
    <property type="evidence" value="ECO:0007669"/>
    <property type="project" value="InterPro"/>
</dbReference>
<dbReference type="CDD" id="cd07026">
    <property type="entry name" value="Ribosomal_L20"/>
    <property type="match status" value="1"/>
</dbReference>
<dbReference type="FunFam" id="1.10.1900.20:FF:000001">
    <property type="entry name" value="50S ribosomal protein L20"/>
    <property type="match status" value="1"/>
</dbReference>
<dbReference type="Gene3D" id="6.10.160.10">
    <property type="match status" value="1"/>
</dbReference>
<dbReference type="Gene3D" id="1.10.1900.20">
    <property type="entry name" value="Ribosomal protein L20"/>
    <property type="match status" value="1"/>
</dbReference>
<dbReference type="HAMAP" id="MF_00382">
    <property type="entry name" value="Ribosomal_bL20"/>
    <property type="match status" value="1"/>
</dbReference>
<dbReference type="InterPro" id="IPR005813">
    <property type="entry name" value="Ribosomal_bL20"/>
</dbReference>
<dbReference type="InterPro" id="IPR049946">
    <property type="entry name" value="RIBOSOMAL_L20_CS"/>
</dbReference>
<dbReference type="InterPro" id="IPR035566">
    <property type="entry name" value="Ribosomal_protein_bL20_C"/>
</dbReference>
<dbReference type="NCBIfam" id="TIGR01032">
    <property type="entry name" value="rplT_bact"/>
    <property type="match status" value="1"/>
</dbReference>
<dbReference type="PANTHER" id="PTHR10986">
    <property type="entry name" value="39S RIBOSOMAL PROTEIN L20"/>
    <property type="match status" value="1"/>
</dbReference>
<dbReference type="Pfam" id="PF00453">
    <property type="entry name" value="Ribosomal_L20"/>
    <property type="match status" value="1"/>
</dbReference>
<dbReference type="PRINTS" id="PR00062">
    <property type="entry name" value="RIBOSOMALL20"/>
</dbReference>
<dbReference type="SUPFAM" id="SSF74731">
    <property type="entry name" value="Ribosomal protein L20"/>
    <property type="match status" value="1"/>
</dbReference>
<dbReference type="PROSITE" id="PS00937">
    <property type="entry name" value="RIBOSOMAL_L20"/>
    <property type="match status" value="1"/>
</dbReference>
<comment type="function">
    <text evidence="1">Binds directly to 23S ribosomal RNA and is necessary for the in vitro assembly process of the 50S ribosomal subunit. It is not involved in the protein synthesizing functions of that subunit.</text>
</comment>
<comment type="subcellular location">
    <subcellularLocation>
        <location>Plastid</location>
        <location>Chloroplast</location>
    </subcellularLocation>
</comment>
<comment type="similarity">
    <text evidence="1">Belongs to the bacterial ribosomal protein bL20 family.</text>
</comment>
<keyword id="KW-0150">Chloroplast</keyword>
<keyword id="KW-0934">Plastid</keyword>
<keyword id="KW-0687">Ribonucleoprotein</keyword>
<keyword id="KW-0689">Ribosomal protein</keyword>
<keyword id="KW-0694">RNA-binding</keyword>
<keyword id="KW-0699">rRNA-binding</keyword>
<evidence type="ECO:0000255" key="1">
    <source>
        <dbReference type="HAMAP-Rule" id="MF_00382"/>
    </source>
</evidence>
<evidence type="ECO:0000305" key="2"/>
<organism>
    <name type="scientific">Huperzia lucidula</name>
    <name type="common">Shining clubmoss</name>
    <name type="synonym">Lycopodium lucidulum</name>
    <dbReference type="NCBI Taxonomy" id="37429"/>
    <lineage>
        <taxon>Eukaryota</taxon>
        <taxon>Viridiplantae</taxon>
        <taxon>Streptophyta</taxon>
        <taxon>Embryophyta</taxon>
        <taxon>Tracheophyta</taxon>
        <taxon>Lycopodiopsida</taxon>
        <taxon>Lycopodiales</taxon>
        <taxon>Lycopodiaceae</taxon>
        <taxon>Huperzioideae</taxon>
        <taxon>Huperzia</taxon>
    </lineage>
</organism>
<accession>Q5SD32</accession>
<reference key="1">
    <citation type="journal article" date="2005" name="Gene">
        <title>The first complete chloroplast genome sequence of a lycophyte, Huperzia lucidula (Lycopodiaceae).</title>
        <authorList>
            <person name="Wolf P.G."/>
            <person name="Karol K.G."/>
            <person name="Mandoli D.F."/>
            <person name="Kuehl J.V."/>
            <person name="Arumuganathan K."/>
            <person name="Ellis M.W."/>
            <person name="Mishler B.D."/>
            <person name="Kelch D.G."/>
            <person name="Olmstead R.G."/>
            <person name="Boore J.L."/>
        </authorList>
    </citation>
    <scope>NUCLEOTIDE SEQUENCE [LARGE SCALE GENOMIC DNA]</scope>
</reference>
<geneLocation type="chloroplast"/>
<name>RK20_HUPLU</name>
<proteinExistence type="inferred from homology"/>
<gene>
    <name evidence="1" type="primary">rpl20</name>
</gene>
<sequence length="136" mass="15730">MTRVKRGSVARKRRKNILKLASGFQGAHSTIFRTGNQQIIKALASSYRDRGKRKRDFRRLWITRINAAARNNGVSYTKFIRHLYKNQVSSNRKVLAQIAIFDTNSFSTILKKLSSGESIRYRNFSPEFYSGEVRTP</sequence>
<protein>
    <recommendedName>
        <fullName evidence="1">Large ribosomal subunit protein bL20c</fullName>
    </recommendedName>
    <alternativeName>
        <fullName evidence="2">50S ribosomal protein L20, chloroplastic</fullName>
    </alternativeName>
</protein>